<comment type="function">
    <text evidence="1">Catalyzes the attachment of serine to tRNA(Ser). Is also able to aminoacylate tRNA(Sec) with serine, to form the misacylated tRNA L-seryl-tRNA(Sec), which will be further converted into selenocysteinyl-tRNA(Sec).</text>
</comment>
<comment type="catalytic activity">
    <reaction evidence="1">
        <text>tRNA(Ser) + L-serine + ATP = L-seryl-tRNA(Ser) + AMP + diphosphate + H(+)</text>
        <dbReference type="Rhea" id="RHEA:12292"/>
        <dbReference type="Rhea" id="RHEA-COMP:9669"/>
        <dbReference type="Rhea" id="RHEA-COMP:9703"/>
        <dbReference type="ChEBI" id="CHEBI:15378"/>
        <dbReference type="ChEBI" id="CHEBI:30616"/>
        <dbReference type="ChEBI" id="CHEBI:33019"/>
        <dbReference type="ChEBI" id="CHEBI:33384"/>
        <dbReference type="ChEBI" id="CHEBI:78442"/>
        <dbReference type="ChEBI" id="CHEBI:78533"/>
        <dbReference type="ChEBI" id="CHEBI:456215"/>
        <dbReference type="EC" id="6.1.1.11"/>
    </reaction>
</comment>
<comment type="catalytic activity">
    <reaction evidence="1">
        <text>tRNA(Sec) + L-serine + ATP = L-seryl-tRNA(Sec) + AMP + diphosphate + H(+)</text>
        <dbReference type="Rhea" id="RHEA:42580"/>
        <dbReference type="Rhea" id="RHEA-COMP:9742"/>
        <dbReference type="Rhea" id="RHEA-COMP:10128"/>
        <dbReference type="ChEBI" id="CHEBI:15378"/>
        <dbReference type="ChEBI" id="CHEBI:30616"/>
        <dbReference type="ChEBI" id="CHEBI:33019"/>
        <dbReference type="ChEBI" id="CHEBI:33384"/>
        <dbReference type="ChEBI" id="CHEBI:78442"/>
        <dbReference type="ChEBI" id="CHEBI:78533"/>
        <dbReference type="ChEBI" id="CHEBI:456215"/>
        <dbReference type="EC" id="6.1.1.11"/>
    </reaction>
</comment>
<comment type="pathway">
    <text evidence="1">Aminoacyl-tRNA biosynthesis; selenocysteinyl-tRNA(Sec) biosynthesis; L-seryl-tRNA(Sec) from L-serine and tRNA(Sec): step 1/1.</text>
</comment>
<comment type="subunit">
    <text evidence="1">Homodimer. The tRNA molecule binds across the dimer.</text>
</comment>
<comment type="subcellular location">
    <subcellularLocation>
        <location evidence="1">Cytoplasm</location>
    </subcellularLocation>
</comment>
<comment type="domain">
    <text evidence="1">Consists of two distinct domains, a catalytic core and a N-terminal extension that is involved in tRNA binding.</text>
</comment>
<comment type="similarity">
    <text evidence="1">Belongs to the class-II aminoacyl-tRNA synthetase family. Type-1 seryl-tRNA synthetase subfamily.</text>
</comment>
<name>SYS_MYCMS</name>
<proteinExistence type="inferred from homology"/>
<reference key="1">
    <citation type="journal article" date="2004" name="Genome Res.">
        <title>The genome sequence of Mycoplasma mycoides subsp. mycoides SC type strain PG1T, the causative agent of contagious bovine pleuropneumonia (CBPP).</title>
        <authorList>
            <person name="Westberg J."/>
            <person name="Persson A."/>
            <person name="Holmberg A."/>
            <person name="Goesmann A."/>
            <person name="Lundeberg J."/>
            <person name="Johansson K.-E."/>
            <person name="Pettersson B."/>
            <person name="Uhlen M."/>
        </authorList>
    </citation>
    <scope>NUCLEOTIDE SEQUENCE [LARGE SCALE GENOMIC DNA]</scope>
    <source>
        <strain>CCUG 32753 / NCTC 10114 / PG1</strain>
    </source>
</reference>
<evidence type="ECO:0000255" key="1">
    <source>
        <dbReference type="HAMAP-Rule" id="MF_00176"/>
    </source>
</evidence>
<gene>
    <name evidence="1" type="primary">serS</name>
    <name type="ordered locus">MSC_0066</name>
</gene>
<organism>
    <name type="scientific">Mycoplasma mycoides subsp. mycoides SC (strain CCUG 32753 / NCTC 10114 / PG1)</name>
    <dbReference type="NCBI Taxonomy" id="272632"/>
    <lineage>
        <taxon>Bacteria</taxon>
        <taxon>Bacillati</taxon>
        <taxon>Mycoplasmatota</taxon>
        <taxon>Mollicutes</taxon>
        <taxon>Mycoplasmataceae</taxon>
        <taxon>Mycoplasma</taxon>
    </lineage>
</organism>
<protein>
    <recommendedName>
        <fullName evidence="1">Serine--tRNA ligase</fullName>
        <ecNumber evidence="1">6.1.1.11</ecNumber>
    </recommendedName>
    <alternativeName>
        <fullName evidence="1">Seryl-tRNA synthetase</fullName>
        <shortName evidence="1">SerRS</shortName>
    </alternativeName>
    <alternativeName>
        <fullName evidence="1">Seryl-tRNA(Ser/Sec) synthetase</fullName>
    </alternativeName>
</protein>
<sequence length="422" mass="48594">MLDINYIEQNLDEVIQILNKRNQQDYSEDLKYAVEKNLKRKQILVKSEALKSRKNQLSKEIGILIKDKKNEQADKAKAEVVSLNEQIIKLDEELRIVNDQILEKLSYIPNLSHKDIYFGKSDEDNVEIRKTKHNPLLTHSTPHWEIATKLGLVDFEKGVKLSGSRFLIYTGLGSKLVRAIADILLKRHEKHGYKEIFCPLIVNKSAMLGTGQLPKFSEDMYQVGEQYLIPTSEVPLTNLHANEILTYDMLPLKYTSFTQCFRQEAGSAGRDTKGMIRLHQFNKVELVKITHPDQSMNELESLVKDAEDVLNMFDLPYRVVELCSGDIGFSSAKTYDLEVWFPEQNKYREISSCSNCTDFQARNIQTRFKDKDGKIKLVHTLNGSGVAIDRLIATILENYWDGEKLVLPTILKPYFDNKEFLK</sequence>
<accession>Q6MUG5</accession>
<keyword id="KW-0030">Aminoacyl-tRNA synthetase</keyword>
<keyword id="KW-0067">ATP-binding</keyword>
<keyword id="KW-0963">Cytoplasm</keyword>
<keyword id="KW-0436">Ligase</keyword>
<keyword id="KW-0547">Nucleotide-binding</keyword>
<keyword id="KW-0648">Protein biosynthesis</keyword>
<keyword id="KW-1185">Reference proteome</keyword>
<feature type="chain" id="PRO_1000019737" description="Serine--tRNA ligase">
    <location>
        <begin position="1"/>
        <end position="422"/>
    </location>
</feature>
<feature type="binding site" evidence="1">
    <location>
        <begin position="231"/>
        <end position="233"/>
    </location>
    <ligand>
        <name>L-serine</name>
        <dbReference type="ChEBI" id="CHEBI:33384"/>
    </ligand>
</feature>
<feature type="binding site" evidence="1">
    <location>
        <begin position="262"/>
        <end position="264"/>
    </location>
    <ligand>
        <name>ATP</name>
        <dbReference type="ChEBI" id="CHEBI:30616"/>
    </ligand>
</feature>
<feature type="binding site" evidence="1">
    <location>
        <position position="285"/>
    </location>
    <ligand>
        <name>L-serine</name>
        <dbReference type="ChEBI" id="CHEBI:33384"/>
    </ligand>
</feature>
<feature type="binding site" evidence="1">
    <location>
        <begin position="349"/>
        <end position="352"/>
    </location>
    <ligand>
        <name>ATP</name>
        <dbReference type="ChEBI" id="CHEBI:30616"/>
    </ligand>
</feature>
<feature type="binding site" evidence="1">
    <location>
        <position position="384"/>
    </location>
    <ligand>
        <name>L-serine</name>
        <dbReference type="ChEBI" id="CHEBI:33384"/>
    </ligand>
</feature>
<dbReference type="EC" id="6.1.1.11" evidence="1"/>
<dbReference type="EMBL" id="BX293980">
    <property type="protein sequence ID" value="CAE76719.1"/>
    <property type="molecule type" value="Genomic_DNA"/>
</dbReference>
<dbReference type="RefSeq" id="NP_975077.1">
    <property type="nucleotide sequence ID" value="NC_005364.2"/>
</dbReference>
<dbReference type="RefSeq" id="WP_011166277.1">
    <property type="nucleotide sequence ID" value="NC_005364.2"/>
</dbReference>
<dbReference type="SMR" id="Q6MUG5"/>
<dbReference type="STRING" id="272632.MSC_0066"/>
<dbReference type="KEGG" id="mmy:MSC_0066"/>
<dbReference type="PATRIC" id="fig|272632.4.peg.67"/>
<dbReference type="eggNOG" id="COG0172">
    <property type="taxonomic scope" value="Bacteria"/>
</dbReference>
<dbReference type="HOGENOM" id="CLU_023797_0_1_14"/>
<dbReference type="UniPathway" id="UPA00906">
    <property type="reaction ID" value="UER00895"/>
</dbReference>
<dbReference type="Proteomes" id="UP000001016">
    <property type="component" value="Chromosome"/>
</dbReference>
<dbReference type="GO" id="GO:0005737">
    <property type="term" value="C:cytoplasm"/>
    <property type="evidence" value="ECO:0007669"/>
    <property type="project" value="UniProtKB-SubCell"/>
</dbReference>
<dbReference type="GO" id="GO:0005524">
    <property type="term" value="F:ATP binding"/>
    <property type="evidence" value="ECO:0007669"/>
    <property type="project" value="UniProtKB-UniRule"/>
</dbReference>
<dbReference type="GO" id="GO:0004828">
    <property type="term" value="F:serine-tRNA ligase activity"/>
    <property type="evidence" value="ECO:0007669"/>
    <property type="project" value="UniProtKB-UniRule"/>
</dbReference>
<dbReference type="GO" id="GO:0016260">
    <property type="term" value="P:selenocysteine biosynthetic process"/>
    <property type="evidence" value="ECO:0007669"/>
    <property type="project" value="UniProtKB-UniRule"/>
</dbReference>
<dbReference type="GO" id="GO:0006434">
    <property type="term" value="P:seryl-tRNA aminoacylation"/>
    <property type="evidence" value="ECO:0007669"/>
    <property type="project" value="UniProtKB-UniRule"/>
</dbReference>
<dbReference type="CDD" id="cd00770">
    <property type="entry name" value="SerRS_core"/>
    <property type="match status" value="1"/>
</dbReference>
<dbReference type="Gene3D" id="3.30.930.10">
    <property type="entry name" value="Bira Bifunctional Protein, Domain 2"/>
    <property type="match status" value="1"/>
</dbReference>
<dbReference type="Gene3D" id="1.10.287.40">
    <property type="entry name" value="Serine-tRNA synthetase, tRNA binding domain"/>
    <property type="match status" value="1"/>
</dbReference>
<dbReference type="HAMAP" id="MF_00176">
    <property type="entry name" value="Ser_tRNA_synth_type1"/>
    <property type="match status" value="1"/>
</dbReference>
<dbReference type="InterPro" id="IPR002314">
    <property type="entry name" value="aa-tRNA-synt_IIb"/>
</dbReference>
<dbReference type="InterPro" id="IPR006195">
    <property type="entry name" value="aa-tRNA-synth_II"/>
</dbReference>
<dbReference type="InterPro" id="IPR045864">
    <property type="entry name" value="aa-tRNA-synth_II/BPL/LPL"/>
</dbReference>
<dbReference type="InterPro" id="IPR002317">
    <property type="entry name" value="Ser-tRNA-ligase_type_1"/>
</dbReference>
<dbReference type="InterPro" id="IPR015866">
    <property type="entry name" value="Ser-tRNA-synth_1_N"/>
</dbReference>
<dbReference type="InterPro" id="IPR042103">
    <property type="entry name" value="SerRS_1_N_sf"/>
</dbReference>
<dbReference type="InterPro" id="IPR033729">
    <property type="entry name" value="SerRS_core"/>
</dbReference>
<dbReference type="InterPro" id="IPR010978">
    <property type="entry name" value="tRNA-bd_arm"/>
</dbReference>
<dbReference type="NCBIfam" id="TIGR00414">
    <property type="entry name" value="serS"/>
    <property type="match status" value="1"/>
</dbReference>
<dbReference type="PANTHER" id="PTHR43697:SF1">
    <property type="entry name" value="SERINE--TRNA LIGASE"/>
    <property type="match status" value="1"/>
</dbReference>
<dbReference type="PANTHER" id="PTHR43697">
    <property type="entry name" value="SERYL-TRNA SYNTHETASE"/>
    <property type="match status" value="1"/>
</dbReference>
<dbReference type="Pfam" id="PF02403">
    <property type="entry name" value="Seryl_tRNA_N"/>
    <property type="match status" value="1"/>
</dbReference>
<dbReference type="Pfam" id="PF00587">
    <property type="entry name" value="tRNA-synt_2b"/>
    <property type="match status" value="1"/>
</dbReference>
<dbReference type="PIRSF" id="PIRSF001529">
    <property type="entry name" value="Ser-tRNA-synth_IIa"/>
    <property type="match status" value="1"/>
</dbReference>
<dbReference type="PRINTS" id="PR00981">
    <property type="entry name" value="TRNASYNTHSER"/>
</dbReference>
<dbReference type="SUPFAM" id="SSF55681">
    <property type="entry name" value="Class II aaRS and biotin synthetases"/>
    <property type="match status" value="1"/>
</dbReference>
<dbReference type="SUPFAM" id="SSF46589">
    <property type="entry name" value="tRNA-binding arm"/>
    <property type="match status" value="1"/>
</dbReference>
<dbReference type="PROSITE" id="PS50862">
    <property type="entry name" value="AA_TRNA_LIGASE_II"/>
    <property type="match status" value="1"/>
</dbReference>